<feature type="chain" id="PRO_1000092837" description="Heat-inducible transcription repressor HrcA">
    <location>
        <begin position="1"/>
        <end position="348"/>
    </location>
</feature>
<name>HRCA_THEYD</name>
<reference key="1">
    <citation type="submission" date="2008-08" db="EMBL/GenBank/DDBJ databases">
        <title>The complete genome sequence of Thermodesulfovibrio yellowstonii strain ATCC 51303 / DSM 11347 / YP87.</title>
        <authorList>
            <person name="Dodson R.J."/>
            <person name="Durkin A.S."/>
            <person name="Wu M."/>
            <person name="Eisen J."/>
            <person name="Sutton G."/>
        </authorList>
    </citation>
    <scope>NUCLEOTIDE SEQUENCE [LARGE SCALE GENOMIC DNA]</scope>
    <source>
        <strain>ATCC 51303 / DSM 11347 / YP87</strain>
    </source>
</reference>
<protein>
    <recommendedName>
        <fullName evidence="1">Heat-inducible transcription repressor HrcA</fullName>
    </recommendedName>
</protein>
<proteinExistence type="inferred from homology"/>
<keyword id="KW-1185">Reference proteome</keyword>
<keyword id="KW-0678">Repressor</keyword>
<keyword id="KW-0346">Stress response</keyword>
<keyword id="KW-0804">Transcription</keyword>
<keyword id="KW-0805">Transcription regulation</keyword>
<gene>
    <name evidence="1" type="primary">hrcA</name>
    <name type="ordered locus">THEYE_A1760</name>
</gene>
<accession>B5YH61</accession>
<comment type="function">
    <text evidence="1">Negative regulator of class I heat shock genes (grpE-dnaK-dnaJ and groELS operons). Prevents heat-shock induction of these operons.</text>
</comment>
<comment type="similarity">
    <text evidence="1">Belongs to the HrcA family.</text>
</comment>
<sequence length="348" mass="40445">MRDTMLDERTKKVLYAVVESYIEKPEPVGSRYIMKKYGFDVCSATIRNIMSDLEDAGFLSQPHTSAGRVPTDKAYRFYVDYIFQSELFSQSLEIKRVIENLTKKLRKLRNNMNSLFLETTQSLSQATRYLGLALLPATEKTALHRVDFIKFKDDLVIAVVVNDKGIVKNKIIKVYPEITQKELNSLADFVNRNYHGKTIDEIRDDLIVRIKKEKIFWDRLISKILKMCQEALYFSREDVYVSGFYHIMHLPDFSDIEKLREVAKTIQDRHLLLKLFENISEDDEVKVIIGQENPVEEFRSFSIIASPYKEKDKSLGVIALVGPKRMNYQRAIMLVNAFARSLTRTLSD</sequence>
<dbReference type="EMBL" id="CP001147">
    <property type="protein sequence ID" value="ACI21027.1"/>
    <property type="molecule type" value="Genomic_DNA"/>
</dbReference>
<dbReference type="RefSeq" id="WP_012545755.1">
    <property type="nucleotide sequence ID" value="NC_011296.1"/>
</dbReference>
<dbReference type="RefSeq" id="YP_002249551.1">
    <property type="nucleotide sequence ID" value="NC_011296.1"/>
</dbReference>
<dbReference type="SMR" id="B5YH61"/>
<dbReference type="STRING" id="289376.THEYE_A1760"/>
<dbReference type="EnsemblBacteria" id="ACI21027">
    <property type="protein sequence ID" value="ACI21027"/>
    <property type="gene ID" value="THEYE_A1760"/>
</dbReference>
<dbReference type="KEGG" id="tye:THEYE_A1760"/>
<dbReference type="PATRIC" id="fig|289376.4.peg.1716"/>
<dbReference type="eggNOG" id="COG1420">
    <property type="taxonomic scope" value="Bacteria"/>
</dbReference>
<dbReference type="HOGENOM" id="CLU_050019_1_0_0"/>
<dbReference type="InParanoid" id="B5YH61"/>
<dbReference type="OrthoDB" id="9783139at2"/>
<dbReference type="Proteomes" id="UP000000718">
    <property type="component" value="Chromosome"/>
</dbReference>
<dbReference type="GO" id="GO:0003677">
    <property type="term" value="F:DNA binding"/>
    <property type="evidence" value="ECO:0007669"/>
    <property type="project" value="InterPro"/>
</dbReference>
<dbReference type="GO" id="GO:0045892">
    <property type="term" value="P:negative regulation of DNA-templated transcription"/>
    <property type="evidence" value="ECO:0000318"/>
    <property type="project" value="GO_Central"/>
</dbReference>
<dbReference type="Gene3D" id="3.30.450.40">
    <property type="match status" value="1"/>
</dbReference>
<dbReference type="Gene3D" id="3.30.390.60">
    <property type="entry name" value="Heat-inducible transcription repressor hrca homolog, domain 3"/>
    <property type="match status" value="1"/>
</dbReference>
<dbReference type="Gene3D" id="1.10.10.10">
    <property type="entry name" value="Winged helix-like DNA-binding domain superfamily/Winged helix DNA-binding domain"/>
    <property type="match status" value="1"/>
</dbReference>
<dbReference type="HAMAP" id="MF_00081">
    <property type="entry name" value="HrcA"/>
    <property type="match status" value="1"/>
</dbReference>
<dbReference type="InterPro" id="IPR029016">
    <property type="entry name" value="GAF-like_dom_sf"/>
</dbReference>
<dbReference type="InterPro" id="IPR002571">
    <property type="entry name" value="HrcA"/>
</dbReference>
<dbReference type="InterPro" id="IPR021153">
    <property type="entry name" value="HrcA_C"/>
</dbReference>
<dbReference type="InterPro" id="IPR036388">
    <property type="entry name" value="WH-like_DNA-bd_sf"/>
</dbReference>
<dbReference type="InterPro" id="IPR036390">
    <property type="entry name" value="WH_DNA-bd_sf"/>
</dbReference>
<dbReference type="InterPro" id="IPR023120">
    <property type="entry name" value="WHTH_transcript_rep_HrcA_IDD"/>
</dbReference>
<dbReference type="NCBIfam" id="TIGR00331">
    <property type="entry name" value="hrcA"/>
    <property type="match status" value="1"/>
</dbReference>
<dbReference type="PANTHER" id="PTHR34824">
    <property type="entry name" value="HEAT-INDUCIBLE TRANSCRIPTION REPRESSOR HRCA"/>
    <property type="match status" value="1"/>
</dbReference>
<dbReference type="PANTHER" id="PTHR34824:SF1">
    <property type="entry name" value="HEAT-INDUCIBLE TRANSCRIPTION REPRESSOR HRCA"/>
    <property type="match status" value="1"/>
</dbReference>
<dbReference type="Pfam" id="PF01628">
    <property type="entry name" value="HrcA"/>
    <property type="match status" value="1"/>
</dbReference>
<dbReference type="PIRSF" id="PIRSF005485">
    <property type="entry name" value="HrcA"/>
    <property type="match status" value="1"/>
</dbReference>
<dbReference type="SUPFAM" id="SSF55781">
    <property type="entry name" value="GAF domain-like"/>
    <property type="match status" value="1"/>
</dbReference>
<dbReference type="SUPFAM" id="SSF46785">
    <property type="entry name" value="Winged helix' DNA-binding domain"/>
    <property type="match status" value="1"/>
</dbReference>
<organism>
    <name type="scientific">Thermodesulfovibrio yellowstonii (strain ATCC 51303 / DSM 11347 / YP87)</name>
    <dbReference type="NCBI Taxonomy" id="289376"/>
    <lineage>
        <taxon>Bacteria</taxon>
        <taxon>Pseudomonadati</taxon>
        <taxon>Nitrospirota</taxon>
        <taxon>Thermodesulfovibrionia</taxon>
        <taxon>Thermodesulfovibrionales</taxon>
        <taxon>Thermodesulfovibrionaceae</taxon>
        <taxon>Thermodesulfovibrio</taxon>
    </lineage>
</organism>
<evidence type="ECO:0000255" key="1">
    <source>
        <dbReference type="HAMAP-Rule" id="MF_00081"/>
    </source>
</evidence>